<accession>Q0P8U0</accession>
<feature type="chain" id="PRO_0000418934" description="Pseudaminic acid synthase">
    <location>
        <begin position="1"/>
        <end position="343"/>
    </location>
</feature>
<feature type="domain" description="AFP-like" evidence="1">
    <location>
        <begin position="287"/>
        <end position="343"/>
    </location>
</feature>
<feature type="turn" evidence="4">
    <location>
        <begin position="8"/>
        <end position="10"/>
    </location>
</feature>
<feature type="strand" evidence="4">
    <location>
        <begin position="13"/>
        <end position="17"/>
    </location>
</feature>
<feature type="turn" evidence="4">
    <location>
        <begin position="19"/>
        <end position="24"/>
    </location>
</feature>
<feature type="helix" evidence="4">
    <location>
        <begin position="26"/>
        <end position="39"/>
    </location>
</feature>
<feature type="strand" evidence="4">
    <location>
        <begin position="42"/>
        <end position="48"/>
    </location>
</feature>
<feature type="helix" evidence="4">
    <location>
        <begin position="51"/>
        <end position="54"/>
    </location>
</feature>
<feature type="helix" evidence="4">
    <location>
        <begin position="61"/>
        <end position="63"/>
    </location>
</feature>
<feature type="turn" evidence="4">
    <location>
        <begin position="69"/>
        <end position="72"/>
    </location>
</feature>
<feature type="helix" evidence="4">
    <location>
        <begin position="75"/>
        <end position="82"/>
    </location>
</feature>
<feature type="helix" evidence="4">
    <location>
        <begin position="86"/>
        <end position="99"/>
    </location>
</feature>
<feature type="strand" evidence="4">
    <location>
        <begin position="102"/>
        <end position="107"/>
    </location>
</feature>
<feature type="helix" evidence="4">
    <location>
        <begin position="110"/>
        <end position="116"/>
    </location>
</feature>
<feature type="helix" evidence="4">
    <location>
        <begin position="117"/>
        <end position="119"/>
    </location>
</feature>
<feature type="strand" evidence="4">
    <location>
        <begin position="124"/>
        <end position="126"/>
    </location>
</feature>
<feature type="helix" evidence="4">
    <location>
        <begin position="128"/>
        <end position="130"/>
    </location>
</feature>
<feature type="helix" evidence="4">
    <location>
        <begin position="134"/>
        <end position="141"/>
    </location>
</feature>
<feature type="strand" evidence="4">
    <location>
        <begin position="147"/>
        <end position="150"/>
    </location>
</feature>
<feature type="helix" evidence="4">
    <location>
        <begin position="156"/>
        <end position="168"/>
    </location>
</feature>
<feature type="strand" evidence="4">
    <location>
        <begin position="174"/>
        <end position="180"/>
    </location>
</feature>
<feature type="helix" evidence="4">
    <location>
        <begin position="187"/>
        <end position="189"/>
    </location>
</feature>
<feature type="helix" evidence="4">
    <location>
        <begin position="194"/>
        <end position="202"/>
    </location>
</feature>
<feature type="strand" evidence="4">
    <location>
        <begin position="205"/>
        <end position="210"/>
    </location>
</feature>
<feature type="helix" evidence="4">
    <location>
        <begin position="216"/>
        <end position="223"/>
    </location>
</feature>
<feature type="strand" evidence="4">
    <location>
        <begin position="228"/>
        <end position="233"/>
    </location>
</feature>
<feature type="turn" evidence="4">
    <location>
        <begin position="244"/>
        <end position="246"/>
    </location>
</feature>
<feature type="helix" evidence="4">
    <location>
        <begin position="250"/>
        <end position="267"/>
    </location>
</feature>
<feature type="helix" evidence="4">
    <location>
        <begin position="276"/>
        <end position="281"/>
    </location>
</feature>
<feature type="helix" evidence="4">
    <location>
        <begin position="282"/>
        <end position="284"/>
    </location>
</feature>
<feature type="strand" evidence="4">
    <location>
        <begin position="287"/>
        <end position="292"/>
    </location>
</feature>
<feature type="turn" evidence="4">
    <location>
        <begin position="302"/>
        <end position="304"/>
    </location>
</feature>
<feature type="strand" evidence="4">
    <location>
        <begin position="305"/>
        <end position="314"/>
    </location>
</feature>
<feature type="helix" evidence="4">
    <location>
        <begin position="316"/>
        <end position="318"/>
    </location>
</feature>
<feature type="helix" evidence="4">
    <location>
        <begin position="319"/>
        <end position="322"/>
    </location>
</feature>
<dbReference type="EC" id="2.5.1.97"/>
<dbReference type="EMBL" id="AL111168">
    <property type="protein sequence ID" value="CAL35431.1"/>
    <property type="molecule type" value="Genomic_DNA"/>
</dbReference>
<dbReference type="PIR" id="B81275">
    <property type="entry name" value="B81275"/>
</dbReference>
<dbReference type="RefSeq" id="WP_002870258.1">
    <property type="nucleotide sequence ID" value="NZ_SZUC01000001.1"/>
</dbReference>
<dbReference type="RefSeq" id="YP_002344707.1">
    <property type="nucleotide sequence ID" value="NC_002163.1"/>
</dbReference>
<dbReference type="PDB" id="8H2C">
    <property type="method" value="X-ray"/>
    <property type="resolution" value="2.90 A"/>
    <property type="chains" value="A/B/C/D=1-343"/>
</dbReference>
<dbReference type="PDBsum" id="8H2C"/>
<dbReference type="SMR" id="Q0P8U0"/>
<dbReference type="IntAct" id="Q0P8U0">
    <property type="interactions" value="20"/>
</dbReference>
<dbReference type="STRING" id="192222.Cj1317"/>
<dbReference type="PaxDb" id="192222-Cj1317"/>
<dbReference type="EnsemblBacteria" id="CAL35431">
    <property type="protein sequence ID" value="CAL35431"/>
    <property type="gene ID" value="Cj1317"/>
</dbReference>
<dbReference type="GeneID" id="905609"/>
<dbReference type="KEGG" id="cje:Cj1317"/>
<dbReference type="PATRIC" id="fig|192222.6.peg.1299"/>
<dbReference type="eggNOG" id="COG2089">
    <property type="taxonomic scope" value="Bacteria"/>
</dbReference>
<dbReference type="HOGENOM" id="CLU_040465_0_1_7"/>
<dbReference type="OrthoDB" id="9781701at2"/>
<dbReference type="BioCyc" id="MetaCyc:MONOMER-14522"/>
<dbReference type="Proteomes" id="UP000000799">
    <property type="component" value="Chromosome"/>
</dbReference>
<dbReference type="GO" id="GO:0046872">
    <property type="term" value="F:metal ion binding"/>
    <property type="evidence" value="ECO:0007669"/>
    <property type="project" value="UniProtKB-KW"/>
</dbReference>
<dbReference type="GO" id="GO:0047444">
    <property type="term" value="F:N-acylneuraminate-9-phosphate synthase activity"/>
    <property type="evidence" value="ECO:0007669"/>
    <property type="project" value="TreeGrafter"/>
</dbReference>
<dbReference type="GO" id="GO:0016051">
    <property type="term" value="P:carbohydrate biosynthetic process"/>
    <property type="evidence" value="ECO:0007669"/>
    <property type="project" value="InterPro"/>
</dbReference>
<dbReference type="GO" id="GO:0070085">
    <property type="term" value="P:glycosylation"/>
    <property type="evidence" value="ECO:0007669"/>
    <property type="project" value="TreeGrafter"/>
</dbReference>
<dbReference type="CDD" id="cd11615">
    <property type="entry name" value="SAF_NeuB_like"/>
    <property type="match status" value="1"/>
</dbReference>
<dbReference type="Gene3D" id="3.20.20.70">
    <property type="entry name" value="Aldolase class I"/>
    <property type="match status" value="1"/>
</dbReference>
<dbReference type="Gene3D" id="3.90.1210.10">
    <property type="entry name" value="Antifreeze-like/N-acetylneuraminic acid synthase C-terminal domain"/>
    <property type="match status" value="1"/>
</dbReference>
<dbReference type="InterPro" id="IPR006190">
    <property type="entry name" value="AFP_Neu5c_C"/>
</dbReference>
<dbReference type="InterPro" id="IPR036732">
    <property type="entry name" value="AFP_Neu5c_C_sf"/>
</dbReference>
<dbReference type="InterPro" id="IPR013785">
    <property type="entry name" value="Aldolase_TIM"/>
</dbReference>
<dbReference type="InterPro" id="IPR013132">
    <property type="entry name" value="Neu5Ac_N"/>
</dbReference>
<dbReference type="InterPro" id="IPR051690">
    <property type="entry name" value="Nonulosonic_Acid_Synth"/>
</dbReference>
<dbReference type="InterPro" id="IPR020030">
    <property type="entry name" value="Pseudaminic_synth_PseI"/>
</dbReference>
<dbReference type="InterPro" id="IPR013974">
    <property type="entry name" value="SAF"/>
</dbReference>
<dbReference type="NCBIfam" id="TIGR03586">
    <property type="entry name" value="PseI"/>
    <property type="match status" value="1"/>
</dbReference>
<dbReference type="PANTHER" id="PTHR42966">
    <property type="entry name" value="N-ACETYLNEURAMINATE SYNTHASE"/>
    <property type="match status" value="1"/>
</dbReference>
<dbReference type="PANTHER" id="PTHR42966:SF2">
    <property type="entry name" value="PSEUDAMINIC ACID SYNTHASE"/>
    <property type="match status" value="1"/>
</dbReference>
<dbReference type="Pfam" id="PF03102">
    <property type="entry name" value="NeuB"/>
    <property type="match status" value="1"/>
</dbReference>
<dbReference type="Pfam" id="PF08666">
    <property type="entry name" value="SAF"/>
    <property type="match status" value="1"/>
</dbReference>
<dbReference type="SMART" id="SM00858">
    <property type="entry name" value="SAF"/>
    <property type="match status" value="1"/>
</dbReference>
<dbReference type="SUPFAM" id="SSF51269">
    <property type="entry name" value="AFP III-like domain"/>
    <property type="match status" value="1"/>
</dbReference>
<dbReference type="SUPFAM" id="SSF51569">
    <property type="entry name" value="Aldolase"/>
    <property type="match status" value="1"/>
</dbReference>
<dbReference type="PROSITE" id="PS50844">
    <property type="entry name" value="AFP_LIKE"/>
    <property type="match status" value="1"/>
</dbReference>
<comment type="function">
    <text evidence="2">Catalyzes the fifth step in the biosynthesis of pseudaminic acid, a sialic-acid-like sugar that is used to modify flagellin. Catalyzes the condensation of phosphoenolpyruvate with 2,4-diacetamido-2,4,6-trideoxy-beta-l-altropyranose, forming pseudaminic acid.</text>
</comment>
<comment type="catalytic activity">
    <reaction evidence="2">
        <text>2,4-diacetamido-2,4,6-trideoxy-beta-L-altrose + phosphoenolpyruvate + H2O = pseudaminate + phosphate</text>
        <dbReference type="Rhea" id="RHEA:31631"/>
        <dbReference type="ChEBI" id="CHEBI:15377"/>
        <dbReference type="ChEBI" id="CHEBI:43474"/>
        <dbReference type="ChEBI" id="CHEBI:58702"/>
        <dbReference type="ChEBI" id="CHEBI:63282"/>
        <dbReference type="ChEBI" id="CHEBI:63283"/>
        <dbReference type="EC" id="2.5.1.97"/>
    </reaction>
</comment>
<comment type="cofactor">
    <cofactor evidence="2">
        <name>a divalent metal cation</name>
        <dbReference type="ChEBI" id="CHEBI:60240"/>
    </cofactor>
</comment>
<comment type="biophysicochemical properties">
    <kinetics>
        <KM evidence="2">6.5 uM for phosphoenolpyruvate</KM>
        <KM evidence="2">9.5 uM for 6-deoxy-AltdiNAc</KM>
        <text>kcat is 0.65 sec(-1).</text>
    </kinetics>
    <phDependence>
        <text evidence="2">Optimum pH is 7.0.</text>
    </phDependence>
</comment>
<comment type="similarity">
    <text evidence="3">Belongs to the pseudaminic acid synthase family.</text>
</comment>
<gene>
    <name type="primary">pseI</name>
    <name type="synonym">neuB3</name>
    <name type="ordered locus">Cj1317</name>
</gene>
<sequence length="343" mass="38647">MQIGNFNTDKKVFIIAELSANHAGSLEMALKSIKAAKKAGADAIKIQTYTPDSLTLNSDKEDFIIKGGLWDKRKLYELYESAKTPYEWHSQIFETAQNEGILCFSSPFAKEDVEFLKRFDPIAYKIASFEANDENFVRLIAKEKKPTIVSTGIATEEELFKICEIFKEEKNPDLVFLKCTSTYPTAIEDMNLKGIVSLKEKFNVEVGLSDHSFGFLAPVMAVALGARVIEKHFMLDKSIESEDSKFSLDFDEFKAMVDAVRQAESALGDGKLDLDEKVLKNRVFARSLYASKDIKKGEMFSEENVKSVRPSFGLHPKFYQELLGKKASKDIKFGDALKQGDFQ</sequence>
<evidence type="ECO:0000255" key="1">
    <source>
        <dbReference type="PROSITE-ProRule" id="PRU00021"/>
    </source>
</evidence>
<evidence type="ECO:0000269" key="2">
    <source>
    </source>
</evidence>
<evidence type="ECO:0000305" key="3"/>
<evidence type="ECO:0007829" key="4">
    <source>
        <dbReference type="PDB" id="8H2C"/>
    </source>
</evidence>
<reference key="1">
    <citation type="journal article" date="2000" name="Nature">
        <title>The genome sequence of the food-borne pathogen Campylobacter jejuni reveals hypervariable sequences.</title>
        <authorList>
            <person name="Parkhill J."/>
            <person name="Wren B.W."/>
            <person name="Mungall K.L."/>
            <person name="Ketley J.M."/>
            <person name="Churcher C.M."/>
            <person name="Basham D."/>
            <person name="Chillingworth T."/>
            <person name="Davies R.M."/>
            <person name="Feltwell T."/>
            <person name="Holroyd S."/>
            <person name="Jagels K."/>
            <person name="Karlyshev A.V."/>
            <person name="Moule S."/>
            <person name="Pallen M.J."/>
            <person name="Penn C.W."/>
            <person name="Quail M.A."/>
            <person name="Rajandream M.A."/>
            <person name="Rutherford K.M."/>
            <person name="van Vliet A.H.M."/>
            <person name="Whitehead S."/>
            <person name="Barrell B.G."/>
        </authorList>
    </citation>
    <scope>NUCLEOTIDE SEQUENCE [LARGE SCALE GENOMIC DNA]</scope>
    <source>
        <strain>ATCC 700819 / NCTC 11168</strain>
    </source>
</reference>
<reference key="2">
    <citation type="journal article" date="2005" name="J. Biol. Chem.">
        <title>Identification and characterization of NeuB3 from Campylobacter jejuni as a pseudaminic acid synthase.</title>
        <authorList>
            <person name="Chou W.K."/>
            <person name="Dick S."/>
            <person name="Wakarchuk W.W."/>
            <person name="Tanner M.E."/>
        </authorList>
    </citation>
    <scope>FUNCTION</scope>
    <scope>CATALYTIC ACTIVITY</scope>
    <scope>COFACTOR</scope>
    <scope>BIOPHYSICOCHEMICAL PROPERTIES</scope>
    <source>
        <strain>ATCC 700819 / NCTC 11168</strain>
    </source>
</reference>
<name>PSEI_CAMJE</name>
<proteinExistence type="evidence at protein level"/>
<keyword id="KW-0002">3D-structure</keyword>
<keyword id="KW-0479">Metal-binding</keyword>
<keyword id="KW-1185">Reference proteome</keyword>
<keyword id="KW-0808">Transferase</keyword>
<organism>
    <name type="scientific">Campylobacter jejuni subsp. jejuni serotype O:2 (strain ATCC 700819 / NCTC 11168)</name>
    <dbReference type="NCBI Taxonomy" id="192222"/>
    <lineage>
        <taxon>Bacteria</taxon>
        <taxon>Pseudomonadati</taxon>
        <taxon>Campylobacterota</taxon>
        <taxon>Epsilonproteobacteria</taxon>
        <taxon>Campylobacterales</taxon>
        <taxon>Campylobacteraceae</taxon>
        <taxon>Campylobacter</taxon>
    </lineage>
</organism>
<protein>
    <recommendedName>
        <fullName>Pseudaminic acid synthase</fullName>
        <ecNumber>2.5.1.97</ecNumber>
    </recommendedName>
    <alternativeName>
        <fullName>Pseudaminic acid biosynthesis protein I</fullName>
    </alternativeName>
</protein>